<protein>
    <recommendedName>
        <fullName evidence="1">Thymidylate kinase</fullName>
        <ecNumber evidence="1">2.7.4.9</ecNumber>
    </recommendedName>
    <alternativeName>
        <fullName evidence="1">dTMP kinase</fullName>
    </alternativeName>
</protein>
<proteinExistence type="inferred from homology"/>
<comment type="function">
    <text evidence="1">Phosphorylation of dTMP to form dTDP in both de novo and salvage pathways of dTTP synthesis.</text>
</comment>
<comment type="catalytic activity">
    <reaction evidence="1">
        <text>dTMP + ATP = dTDP + ADP</text>
        <dbReference type="Rhea" id="RHEA:13517"/>
        <dbReference type="ChEBI" id="CHEBI:30616"/>
        <dbReference type="ChEBI" id="CHEBI:58369"/>
        <dbReference type="ChEBI" id="CHEBI:63528"/>
        <dbReference type="ChEBI" id="CHEBI:456216"/>
        <dbReference type="EC" id="2.7.4.9"/>
    </reaction>
</comment>
<comment type="similarity">
    <text evidence="1">Belongs to the thymidylate kinase family.</text>
</comment>
<sequence length="206" mass="23458">MSKLKQGTFITFEGGEGIGKSTQCQMLYEYLKSQNIPVILTREVGGTNVAEKMREILVHTDLLPMSELLQAMAARYDHMVKKIIPALQAGNIVICDRFIDSTACYQGLELENGIELVYNLHKDLMPPLMPDLTFFIDVESSIAIERVNSRNMSNKFDVRGLDFYNKIYDCFKGLSKKFPERIVTIKASDLNPEQVHELIKKHLNLI</sequence>
<dbReference type="EC" id="2.7.4.9" evidence="1"/>
<dbReference type="EMBL" id="CP000087">
    <property type="protein sequence ID" value="ABE04318.1"/>
    <property type="molecule type" value="Genomic_DNA"/>
</dbReference>
<dbReference type="RefSeq" id="WP_011476931.1">
    <property type="nucleotide sequence ID" value="NC_007940.1"/>
</dbReference>
<dbReference type="SMR" id="Q1RJZ6"/>
<dbReference type="KEGG" id="rbe:RBE_0237"/>
<dbReference type="eggNOG" id="COG0125">
    <property type="taxonomic scope" value="Bacteria"/>
</dbReference>
<dbReference type="HOGENOM" id="CLU_049131_0_2_5"/>
<dbReference type="OrthoDB" id="9774907at2"/>
<dbReference type="Proteomes" id="UP000001951">
    <property type="component" value="Chromosome"/>
</dbReference>
<dbReference type="GO" id="GO:0005829">
    <property type="term" value="C:cytosol"/>
    <property type="evidence" value="ECO:0007669"/>
    <property type="project" value="TreeGrafter"/>
</dbReference>
<dbReference type="GO" id="GO:0005524">
    <property type="term" value="F:ATP binding"/>
    <property type="evidence" value="ECO:0007669"/>
    <property type="project" value="UniProtKB-UniRule"/>
</dbReference>
<dbReference type="GO" id="GO:0004798">
    <property type="term" value="F:dTMP kinase activity"/>
    <property type="evidence" value="ECO:0007669"/>
    <property type="project" value="UniProtKB-UniRule"/>
</dbReference>
<dbReference type="GO" id="GO:0006233">
    <property type="term" value="P:dTDP biosynthetic process"/>
    <property type="evidence" value="ECO:0007669"/>
    <property type="project" value="InterPro"/>
</dbReference>
<dbReference type="GO" id="GO:0006235">
    <property type="term" value="P:dTTP biosynthetic process"/>
    <property type="evidence" value="ECO:0007669"/>
    <property type="project" value="UniProtKB-UniRule"/>
</dbReference>
<dbReference type="GO" id="GO:0006227">
    <property type="term" value="P:dUDP biosynthetic process"/>
    <property type="evidence" value="ECO:0007669"/>
    <property type="project" value="TreeGrafter"/>
</dbReference>
<dbReference type="CDD" id="cd01672">
    <property type="entry name" value="TMPK"/>
    <property type="match status" value="1"/>
</dbReference>
<dbReference type="FunFam" id="3.40.50.300:FF:000225">
    <property type="entry name" value="Thymidylate kinase"/>
    <property type="match status" value="1"/>
</dbReference>
<dbReference type="Gene3D" id="3.40.50.300">
    <property type="entry name" value="P-loop containing nucleotide triphosphate hydrolases"/>
    <property type="match status" value="1"/>
</dbReference>
<dbReference type="HAMAP" id="MF_00165">
    <property type="entry name" value="Thymidylate_kinase"/>
    <property type="match status" value="1"/>
</dbReference>
<dbReference type="InterPro" id="IPR027417">
    <property type="entry name" value="P-loop_NTPase"/>
</dbReference>
<dbReference type="InterPro" id="IPR039430">
    <property type="entry name" value="Thymidylate_kin-like_dom"/>
</dbReference>
<dbReference type="InterPro" id="IPR018095">
    <property type="entry name" value="Thymidylate_kin_CS"/>
</dbReference>
<dbReference type="InterPro" id="IPR018094">
    <property type="entry name" value="Thymidylate_kinase"/>
</dbReference>
<dbReference type="NCBIfam" id="TIGR00041">
    <property type="entry name" value="DTMP_kinase"/>
    <property type="match status" value="1"/>
</dbReference>
<dbReference type="PANTHER" id="PTHR10344">
    <property type="entry name" value="THYMIDYLATE KINASE"/>
    <property type="match status" value="1"/>
</dbReference>
<dbReference type="PANTHER" id="PTHR10344:SF4">
    <property type="entry name" value="UMP-CMP KINASE 2, MITOCHONDRIAL"/>
    <property type="match status" value="1"/>
</dbReference>
<dbReference type="Pfam" id="PF02223">
    <property type="entry name" value="Thymidylate_kin"/>
    <property type="match status" value="1"/>
</dbReference>
<dbReference type="SUPFAM" id="SSF52540">
    <property type="entry name" value="P-loop containing nucleoside triphosphate hydrolases"/>
    <property type="match status" value="1"/>
</dbReference>
<dbReference type="PROSITE" id="PS01331">
    <property type="entry name" value="THYMIDYLATE_KINASE"/>
    <property type="match status" value="1"/>
</dbReference>
<evidence type="ECO:0000255" key="1">
    <source>
        <dbReference type="HAMAP-Rule" id="MF_00165"/>
    </source>
</evidence>
<accession>Q1RJZ6</accession>
<reference key="1">
    <citation type="journal article" date="2006" name="PLoS Genet.">
        <title>Genome sequence of Rickettsia bellii illuminates the role of amoebae in gene exchanges between intracellular pathogens.</title>
        <authorList>
            <person name="Ogata H."/>
            <person name="La Scola B."/>
            <person name="Audic S."/>
            <person name="Renesto P."/>
            <person name="Blanc G."/>
            <person name="Robert C."/>
            <person name="Fournier P.-E."/>
            <person name="Claverie J.-M."/>
            <person name="Raoult D."/>
        </authorList>
    </citation>
    <scope>NUCLEOTIDE SEQUENCE [LARGE SCALE GENOMIC DNA]</scope>
    <source>
        <strain>RML369-C</strain>
    </source>
</reference>
<feature type="chain" id="PRO_0000278012" description="Thymidylate kinase">
    <location>
        <begin position="1"/>
        <end position="206"/>
    </location>
</feature>
<feature type="binding site" evidence="1">
    <location>
        <begin position="14"/>
        <end position="21"/>
    </location>
    <ligand>
        <name>ATP</name>
        <dbReference type="ChEBI" id="CHEBI:30616"/>
    </ligand>
</feature>
<organism>
    <name type="scientific">Rickettsia bellii (strain RML369-C)</name>
    <dbReference type="NCBI Taxonomy" id="336407"/>
    <lineage>
        <taxon>Bacteria</taxon>
        <taxon>Pseudomonadati</taxon>
        <taxon>Pseudomonadota</taxon>
        <taxon>Alphaproteobacteria</taxon>
        <taxon>Rickettsiales</taxon>
        <taxon>Rickettsiaceae</taxon>
        <taxon>Rickettsieae</taxon>
        <taxon>Rickettsia</taxon>
        <taxon>belli group</taxon>
    </lineage>
</organism>
<keyword id="KW-0067">ATP-binding</keyword>
<keyword id="KW-0418">Kinase</keyword>
<keyword id="KW-0545">Nucleotide biosynthesis</keyword>
<keyword id="KW-0547">Nucleotide-binding</keyword>
<keyword id="KW-0808">Transferase</keyword>
<gene>
    <name evidence="1" type="primary">tmk</name>
    <name type="ordered locus">RBE_0237</name>
</gene>
<name>KTHY_RICBR</name>